<name>YDHY_SHIFL</name>
<feature type="chain" id="PRO_0000159299" description="Uncharacterized ferredoxin-like protein YdhY">
    <location>
        <begin position="1"/>
        <end position="208"/>
    </location>
</feature>
<feature type="domain" description="4Fe-4S ferredoxin-type 1" evidence="2">
    <location>
        <begin position="59"/>
        <end position="88"/>
    </location>
</feature>
<feature type="domain" description="4Fe-4S ferredoxin-type 2" evidence="2">
    <location>
        <begin position="114"/>
        <end position="145"/>
    </location>
</feature>
<feature type="domain" description="4Fe-4S ferredoxin-type 3" evidence="2">
    <location>
        <begin position="147"/>
        <end position="176"/>
    </location>
</feature>
<feature type="domain" description="4Fe-4S ferredoxin-type 4" evidence="2">
    <location>
        <begin position="174"/>
        <end position="203"/>
    </location>
</feature>
<feature type="binding site" evidence="1">
    <location>
        <position position="68"/>
    </location>
    <ligand>
        <name>[4Fe-4S] cluster</name>
        <dbReference type="ChEBI" id="CHEBI:49883"/>
        <label>1</label>
    </ligand>
</feature>
<feature type="binding site" evidence="1">
    <location>
        <position position="71"/>
    </location>
    <ligand>
        <name>[4Fe-4S] cluster</name>
        <dbReference type="ChEBI" id="CHEBI:49883"/>
        <label>1</label>
    </ligand>
</feature>
<feature type="binding site" evidence="1">
    <location>
        <position position="74"/>
    </location>
    <ligand>
        <name>[4Fe-4S] cluster</name>
        <dbReference type="ChEBI" id="CHEBI:49883"/>
        <label>1</label>
    </ligand>
</feature>
<feature type="binding site" evidence="1">
    <location>
        <position position="78"/>
    </location>
    <ligand>
        <name>[4Fe-4S] cluster</name>
        <dbReference type="ChEBI" id="CHEBI:49883"/>
        <label>2</label>
    </ligand>
</feature>
<feature type="binding site" evidence="1">
    <location>
        <position position="123"/>
    </location>
    <ligand>
        <name>[4Fe-4S] cluster</name>
        <dbReference type="ChEBI" id="CHEBI:49883"/>
        <label>3</label>
    </ligand>
</feature>
<feature type="binding site" evidence="1">
    <location>
        <position position="126"/>
    </location>
    <ligand>
        <name>[4Fe-4S] cluster</name>
        <dbReference type="ChEBI" id="CHEBI:49883"/>
        <label>3</label>
    </ligand>
</feature>
<feature type="binding site" evidence="1">
    <location>
        <position position="131"/>
    </location>
    <ligand>
        <name>[4Fe-4S] cluster</name>
        <dbReference type="ChEBI" id="CHEBI:49883"/>
        <label>3</label>
    </ligand>
</feature>
<feature type="binding site" evidence="1">
    <location>
        <position position="135"/>
    </location>
    <ligand>
        <name>[4Fe-4S] cluster</name>
        <dbReference type="ChEBI" id="CHEBI:49883"/>
        <label>4</label>
    </ligand>
</feature>
<feature type="binding site" evidence="1">
    <location>
        <position position="156"/>
    </location>
    <ligand>
        <name>[4Fe-4S] cluster</name>
        <dbReference type="ChEBI" id="CHEBI:49883"/>
        <label>4</label>
    </ligand>
</feature>
<feature type="binding site" evidence="1">
    <location>
        <position position="159"/>
    </location>
    <ligand>
        <name>[4Fe-4S] cluster</name>
        <dbReference type="ChEBI" id="CHEBI:49883"/>
        <label>4</label>
    </ligand>
</feature>
<feature type="binding site" evidence="1">
    <location>
        <position position="162"/>
    </location>
    <ligand>
        <name>[4Fe-4S] cluster</name>
        <dbReference type="ChEBI" id="CHEBI:49883"/>
        <label>4</label>
    </ligand>
</feature>
<feature type="binding site" evidence="1">
    <location>
        <position position="166"/>
    </location>
    <ligand>
        <name>[4Fe-4S] cluster</name>
        <dbReference type="ChEBI" id="CHEBI:49883"/>
        <label>3</label>
    </ligand>
</feature>
<feature type="binding site" evidence="1">
    <location>
        <position position="183"/>
    </location>
    <ligand>
        <name>[4Fe-4S] cluster</name>
        <dbReference type="ChEBI" id="CHEBI:49883"/>
        <label>2</label>
    </ligand>
</feature>
<feature type="binding site" evidence="1">
    <location>
        <position position="186"/>
    </location>
    <ligand>
        <name>[4Fe-4S] cluster</name>
        <dbReference type="ChEBI" id="CHEBI:49883"/>
        <label>2</label>
    </ligand>
</feature>
<feature type="binding site" evidence="1">
    <location>
        <position position="189"/>
    </location>
    <ligand>
        <name>[4Fe-4S] cluster</name>
        <dbReference type="ChEBI" id="CHEBI:49883"/>
        <label>2</label>
    </ligand>
</feature>
<feature type="binding site" evidence="1">
    <location>
        <position position="193"/>
    </location>
    <ligand>
        <name>[4Fe-4S] cluster</name>
        <dbReference type="ChEBI" id="CHEBI:49883"/>
        <label>1</label>
    </ligand>
</feature>
<sequence length="208" mass="22367">MNPVDRPLLDIGLTRLEFLRISGKGLAGLTIAPALLSLLGCKQEDIDSGTVGLINTPKGVLVTQRARCTGCHRCEISCTNFNDGSVGTFFSRIKIHRNYFFGDNGVGSGGGLYGDLNYTADTCRQCKEPQCMNVCPIGAITWQQKEGCITVDHKRCIGCSACTTACPWMMATVNTESKKSSKCVLCGECANACPTGALKIIEWKDITV</sequence>
<dbReference type="EMBL" id="AE005674">
    <property type="protein sequence ID" value="AAN43279.1"/>
    <property type="molecule type" value="Genomic_DNA"/>
</dbReference>
<dbReference type="EMBL" id="AE014073">
    <property type="protein sequence ID" value="AAP17166.1"/>
    <property type="molecule type" value="Genomic_DNA"/>
</dbReference>
<dbReference type="RefSeq" id="NP_707572.1">
    <property type="nucleotide sequence ID" value="NC_004337.2"/>
</dbReference>
<dbReference type="RefSeq" id="WP_001070230.1">
    <property type="nucleotide sequence ID" value="NZ_WPGW01000025.1"/>
</dbReference>
<dbReference type="STRING" id="198214.SF1702"/>
<dbReference type="PaxDb" id="198214-SF1702"/>
<dbReference type="DNASU" id="1078173"/>
<dbReference type="GeneID" id="1024895"/>
<dbReference type="KEGG" id="sfl:SF1702"/>
<dbReference type="KEGG" id="sfx:S1834"/>
<dbReference type="PATRIC" id="fig|198214.7.peg.2014"/>
<dbReference type="HOGENOM" id="CLU_043374_3_2_6"/>
<dbReference type="Proteomes" id="UP000001006">
    <property type="component" value="Chromosome"/>
</dbReference>
<dbReference type="Proteomes" id="UP000002673">
    <property type="component" value="Chromosome"/>
</dbReference>
<dbReference type="GO" id="GO:0051539">
    <property type="term" value="F:4 iron, 4 sulfur cluster binding"/>
    <property type="evidence" value="ECO:0007669"/>
    <property type="project" value="UniProtKB-KW"/>
</dbReference>
<dbReference type="GO" id="GO:0046872">
    <property type="term" value="F:metal ion binding"/>
    <property type="evidence" value="ECO:0007669"/>
    <property type="project" value="UniProtKB-KW"/>
</dbReference>
<dbReference type="CDD" id="cd10550">
    <property type="entry name" value="DMSOR_beta_like"/>
    <property type="match status" value="1"/>
</dbReference>
<dbReference type="Gene3D" id="3.30.70.20">
    <property type="match status" value="2"/>
</dbReference>
<dbReference type="InterPro" id="IPR017896">
    <property type="entry name" value="4Fe4S_Fe-S-bd"/>
</dbReference>
<dbReference type="InterPro" id="IPR017900">
    <property type="entry name" value="4Fe4S_Fe_S_CS"/>
</dbReference>
<dbReference type="InterPro" id="IPR050294">
    <property type="entry name" value="RnfB_subfamily"/>
</dbReference>
<dbReference type="NCBIfam" id="NF007382">
    <property type="entry name" value="PRK09898.1"/>
    <property type="match status" value="1"/>
</dbReference>
<dbReference type="PANTHER" id="PTHR42859:SF17">
    <property type="entry name" value="ELECTRON TRANSPORT PROTEIN HYDN-RELATED"/>
    <property type="match status" value="1"/>
</dbReference>
<dbReference type="PANTHER" id="PTHR42859">
    <property type="entry name" value="OXIDOREDUCTASE"/>
    <property type="match status" value="1"/>
</dbReference>
<dbReference type="Pfam" id="PF13247">
    <property type="entry name" value="Fer4_11"/>
    <property type="match status" value="1"/>
</dbReference>
<dbReference type="Pfam" id="PF12800">
    <property type="entry name" value="Fer4_4"/>
    <property type="match status" value="1"/>
</dbReference>
<dbReference type="SUPFAM" id="SSF54862">
    <property type="entry name" value="4Fe-4S ferredoxins"/>
    <property type="match status" value="1"/>
</dbReference>
<dbReference type="PROSITE" id="PS00198">
    <property type="entry name" value="4FE4S_FER_1"/>
    <property type="match status" value="2"/>
</dbReference>
<dbReference type="PROSITE" id="PS51379">
    <property type="entry name" value="4FE4S_FER_2"/>
    <property type="match status" value="4"/>
</dbReference>
<accession>P0AAL8</accession>
<accession>P77186</accession>
<reference key="1">
    <citation type="journal article" date="2002" name="Nucleic Acids Res.">
        <title>Genome sequence of Shigella flexneri 2a: insights into pathogenicity through comparison with genomes of Escherichia coli K12 and O157.</title>
        <authorList>
            <person name="Jin Q."/>
            <person name="Yuan Z."/>
            <person name="Xu J."/>
            <person name="Wang Y."/>
            <person name="Shen Y."/>
            <person name="Lu W."/>
            <person name="Wang J."/>
            <person name="Liu H."/>
            <person name="Yang J."/>
            <person name="Yang F."/>
            <person name="Zhang X."/>
            <person name="Zhang J."/>
            <person name="Yang G."/>
            <person name="Wu H."/>
            <person name="Qu D."/>
            <person name="Dong J."/>
            <person name="Sun L."/>
            <person name="Xue Y."/>
            <person name="Zhao A."/>
            <person name="Gao Y."/>
            <person name="Zhu J."/>
            <person name="Kan B."/>
            <person name="Ding K."/>
            <person name="Chen S."/>
            <person name="Cheng H."/>
            <person name="Yao Z."/>
            <person name="He B."/>
            <person name="Chen R."/>
            <person name="Ma D."/>
            <person name="Qiang B."/>
            <person name="Wen Y."/>
            <person name="Hou Y."/>
            <person name="Yu J."/>
        </authorList>
    </citation>
    <scope>NUCLEOTIDE SEQUENCE [LARGE SCALE GENOMIC DNA]</scope>
    <source>
        <strain>301 / Serotype 2a</strain>
    </source>
</reference>
<reference key="2">
    <citation type="journal article" date="2003" name="Infect. Immun.">
        <title>Complete genome sequence and comparative genomics of Shigella flexneri serotype 2a strain 2457T.</title>
        <authorList>
            <person name="Wei J."/>
            <person name="Goldberg M.B."/>
            <person name="Burland V."/>
            <person name="Venkatesan M.M."/>
            <person name="Deng W."/>
            <person name="Fournier G."/>
            <person name="Mayhew G.F."/>
            <person name="Plunkett G. III"/>
            <person name="Rose D.J."/>
            <person name="Darling A."/>
            <person name="Mau B."/>
            <person name="Perna N.T."/>
            <person name="Payne S.M."/>
            <person name="Runyen-Janecky L.J."/>
            <person name="Zhou S."/>
            <person name="Schwartz D.C."/>
            <person name="Blattner F.R."/>
        </authorList>
    </citation>
    <scope>NUCLEOTIDE SEQUENCE [LARGE SCALE GENOMIC DNA]</scope>
    <source>
        <strain>ATCC 700930 / 2457T / Serotype 2a</strain>
    </source>
</reference>
<proteinExistence type="predicted"/>
<gene>
    <name type="primary">ydhY</name>
    <name type="ordered locus">SF1702</name>
    <name type="ordered locus">S1834</name>
</gene>
<evidence type="ECO:0000250" key="1"/>
<evidence type="ECO:0000255" key="2">
    <source>
        <dbReference type="PROSITE-ProRule" id="PRU00711"/>
    </source>
</evidence>
<protein>
    <recommendedName>
        <fullName>Uncharacterized ferredoxin-like protein YdhY</fullName>
    </recommendedName>
</protein>
<organism>
    <name type="scientific">Shigella flexneri</name>
    <dbReference type="NCBI Taxonomy" id="623"/>
    <lineage>
        <taxon>Bacteria</taxon>
        <taxon>Pseudomonadati</taxon>
        <taxon>Pseudomonadota</taxon>
        <taxon>Gammaproteobacteria</taxon>
        <taxon>Enterobacterales</taxon>
        <taxon>Enterobacteriaceae</taxon>
        <taxon>Shigella</taxon>
    </lineage>
</organism>
<keyword id="KW-0004">4Fe-4S</keyword>
<keyword id="KW-0408">Iron</keyword>
<keyword id="KW-0411">Iron-sulfur</keyword>
<keyword id="KW-0479">Metal-binding</keyword>
<keyword id="KW-1185">Reference proteome</keyword>
<keyword id="KW-0677">Repeat</keyword>